<organism>
    <name type="scientific">Homo sapiens</name>
    <name type="common">Human</name>
    <dbReference type="NCBI Taxonomy" id="9606"/>
    <lineage>
        <taxon>Eukaryota</taxon>
        <taxon>Metazoa</taxon>
        <taxon>Chordata</taxon>
        <taxon>Craniata</taxon>
        <taxon>Vertebrata</taxon>
        <taxon>Euteleostomi</taxon>
        <taxon>Mammalia</taxon>
        <taxon>Eutheria</taxon>
        <taxon>Euarchontoglires</taxon>
        <taxon>Primates</taxon>
        <taxon>Haplorrhini</taxon>
        <taxon>Catarrhini</taxon>
        <taxon>Hominidae</taxon>
        <taxon>Homo</taxon>
    </lineage>
</organism>
<feature type="chain" id="PRO_0000306118" description="Uncharacterized protein C1orf167">
    <location>
        <begin position="1"/>
        <end position="1449"/>
    </location>
</feature>
<feature type="region of interest" description="Disordered" evidence="1">
    <location>
        <begin position="1"/>
        <end position="32"/>
    </location>
</feature>
<feature type="region of interest" description="Disordered" evidence="1">
    <location>
        <begin position="123"/>
        <end position="201"/>
    </location>
</feature>
<feature type="region of interest" description="Disordered" evidence="1">
    <location>
        <begin position="258"/>
        <end position="298"/>
    </location>
</feature>
<feature type="region of interest" description="Disordered" evidence="1">
    <location>
        <begin position="315"/>
        <end position="437"/>
    </location>
</feature>
<feature type="region of interest" description="Disordered" evidence="1">
    <location>
        <begin position="523"/>
        <end position="551"/>
    </location>
</feature>
<feature type="region of interest" description="Disordered" evidence="1">
    <location>
        <begin position="1257"/>
        <end position="1278"/>
    </location>
</feature>
<feature type="region of interest" description="Disordered" evidence="1">
    <location>
        <begin position="1399"/>
        <end position="1449"/>
    </location>
</feature>
<feature type="compositionally biased region" description="Basic and acidic residues" evidence="1">
    <location>
        <begin position="1"/>
        <end position="13"/>
    </location>
</feature>
<feature type="compositionally biased region" description="Polar residues" evidence="1">
    <location>
        <begin position="123"/>
        <end position="133"/>
    </location>
</feature>
<feature type="compositionally biased region" description="Polar residues" evidence="1">
    <location>
        <begin position="315"/>
        <end position="333"/>
    </location>
</feature>
<feature type="compositionally biased region" description="Polar residues" evidence="1">
    <location>
        <begin position="384"/>
        <end position="394"/>
    </location>
</feature>
<feature type="compositionally biased region" description="Basic and acidic residues" evidence="1">
    <location>
        <begin position="400"/>
        <end position="419"/>
    </location>
</feature>
<feature type="compositionally biased region" description="Polar residues" evidence="1">
    <location>
        <begin position="426"/>
        <end position="437"/>
    </location>
</feature>
<feature type="compositionally biased region" description="Basic and acidic residues" evidence="1">
    <location>
        <begin position="1258"/>
        <end position="1270"/>
    </location>
</feature>
<feature type="splice variant" id="VSP_062232" description="In isoform 3.">
    <original>M</original>
    <variation>MTRMSCPWGSYQWEPGACPAAPRGIGGGDMAGGIPDVRGLQEAALGAGRSQEEARLVEEAQTPVMLPQDSGQRVEEVPGDLMAKRMSLILHVQKLPWDHVPCLRRTRQNLYQDVGGHAHGSGLGGAKRGAARSALRRPLPPATCRPAGIVSGPSPRLDSNPTGAHLIKQTRPLTVEWTKDTPVPEPM</variation>
    <location>
        <position position="1"/>
    </location>
</feature>
<feature type="splice variant" id="VSP_062233" description="In isoform 3.">
    <original>E</original>
    <variation>GKRLK</variation>
    <location>
        <position position="24"/>
    </location>
</feature>
<feature type="splice variant" id="VSP_062234" description="In isoform 3.">
    <location>
        <begin position="264"/>
        <end position="392"/>
    </location>
</feature>
<feature type="splice variant" id="VSP_062235" description="In isoform 3.">
    <original>WRNLALQQKQVQPHMQAGPGSPPSRRAQGKGLSLGRSTVVDPAQRSRLEHTS</original>
    <variation>VSGLQVGPGGRVKQC</variation>
    <location>
        <begin position="515"/>
        <end position="566"/>
    </location>
</feature>
<feature type="splice variant" id="VSP_028420" description="In isoform 2." evidence="3">
    <original>L</original>
    <variation>LRARSC</variation>
    <location>
        <position position="1282"/>
    </location>
</feature>
<feature type="splice variant" id="VSP_062236" description="In isoform 3.">
    <location>
        <begin position="1283"/>
        <end position="1287"/>
    </location>
</feature>
<feature type="sequence variant" id="VAR_035266" description="In dbSNP:rs6668699.">
    <original>P</original>
    <variation>S</variation>
    <location>
        <position position="263"/>
    </location>
</feature>
<feature type="sequence variant" id="VAR_035267" description="In dbSNP:rs4845880.">
    <original>R</original>
    <variation>Q</variation>
    <location>
        <position position="483"/>
    </location>
</feature>
<feature type="sequence variant" id="VAR_035268" description="In dbSNP:rs6667720.">
    <original>R</original>
    <variation>W</variation>
    <location>
        <position position="578"/>
    </location>
</feature>
<feature type="sequence variant" id="VAR_035269" description="In dbSNP:rs6699881." evidence="2">
    <original>W</original>
    <variation>R</variation>
    <location>
        <position position="758"/>
    </location>
</feature>
<feature type="sequence variant" id="VAR_035270" description="In dbSNP:rs7538516." evidence="2">
    <original>R</original>
    <variation>C</variation>
    <location>
        <position position="776"/>
    </location>
</feature>
<feature type="sequence variant" id="VAR_035271" description="In dbSNP:rs6697244." evidence="2">
    <original>S</original>
    <variation>I</variation>
    <location>
        <position position="824"/>
    </location>
</feature>
<feature type="sequence variant" id="VAR_035272" description="In dbSNP:rs4846043." evidence="2">
    <original>R</original>
    <variation>H</variation>
    <location>
        <position position="920"/>
    </location>
</feature>
<feature type="sequence variant" id="VAR_035273" description="In dbSNP:rs4846044." evidence="2">
    <original>W</original>
    <variation>R</variation>
    <location>
        <position position="931"/>
    </location>
</feature>
<feature type="sequence variant" id="VAR_035274" description="In dbSNP:rs3737967.">
    <original>R</original>
    <variation>H</variation>
    <location>
        <position position="1191"/>
    </location>
</feature>
<feature type="sequence variant" id="VAR_035275" description="In dbSNP:rs1537514.">
    <original>C</original>
    <variation>S</variation>
    <location>
        <position position="1271"/>
    </location>
</feature>
<feature type="sequence variant" id="VAR_035276" description="In dbSNP:rs868014." evidence="2">
    <original>R</original>
    <variation>G</variation>
    <location>
        <position position="1432"/>
    </location>
</feature>
<comment type="alternative products">
    <event type="alternative splicing"/>
    <isoform>
        <id>Q5SNV9-1</id>
        <name>1</name>
        <sequence type="displayed"/>
    </isoform>
    <isoform>
        <id>Q5SNV9-2</id>
        <name>2</name>
        <sequence type="described" ref="VSP_028420"/>
    </isoform>
    <isoform>
        <id>Q5SNV9-3</id>
        <name>3</name>
        <sequence type="described" ref="VSP_062232 VSP_062233 VSP_062234 VSP_062235 VSP_062236"/>
    </isoform>
</comment>
<sequence length="1449" mass="160482">MELRSDASHKENVSPKPAALPKPEQRRFRRSLGIGLSGRHDQWVPGCQVERGGPAATPSPGAVLDQEPCRVQTNLASPGPRLGLALKDTTGQLVNSSFWQQSNLQSLARRRQGKAREFAIQQSNLSINETSSPHLCPEPGGSSGPHKLPWGPLLSQEPLARPSSCLRQSGLPAPGTPSGDFRPTEAFAPLDGHTQPGLRSWGGLGSWRSRLVGEPLTLEDLAVPSQNQTQAPSRAAVHQLLASVHCLAQEAARLRCQAPQEPPGAVQQDLWTGGGQPFSAHPQPSQPVLASSDGRRRRLRGHRETAAFLETPASLSDSWAQSKLMSPETTLGTRTKDSLNPEQGLPPAHPLGSGDSCSPWSQDGRAQRGDPSLPRGVGSRGTDPCSSAFSNTAWGVSPKQKGEEGAPRERVHREEERTAFHLSDTVPASSASKNKAQNITAPESEAICWQLLSRCFRSWRHLVKRQREPAAAAVALGRWQLLRKCLQALWLREAQLEAAWGQYTKVLLVRSFREWRNLALQQKQVQPHMQAGPGSPPSRRAQGKGLSLGRSTVVDPAQRSRLEHTSPGSLREEEIAQRLLSHPRQRTDSRHERVQILQALQLAVFFLWCQQKKRARQERETLRKATRATQRTGSFPQAWHSTAAGVAWVAPLSPQHQRAWLCRCFGAWQQFVQRGSRYRDHLADRRTGTLRKCLEQWVRMKQLRESDGAKVTQLSLCRQKAGREAVYTAGPGACGLGAVGQAQGQQEQGRGSLQDACWTLALCWALLLWKMRLFQRQWANSFFQGLQQRMLQRSLRWWHLRALGPDATSSCTKTPSALEPLSSSTLQDSLEKVPRAPTLPDTLQGSLLWAAGQRQQGQCLLLWQARAQQFQGTARWYQHTRQRRIFLSWSRWATAQWAWRELASHRAWDRTCRAVLGLWRQRLLQSRLVEWWAQERGWRLARDALCHWHSCWQGQQFLHEKCQTWVQVHLQGLQKVVFRSWQQAAAHQRCTVTRPEQLLLQSYFQAWCEVVRDTGVLRAQHQAFQDGLRRRALGAVFATWREAQEVAAGAQEQRVAQASLARWRSCGQQGQEDGQQKKARAPQAFPAWPVAPGMHHEAQQQAGESAGAQAAQCWTWCWALWVHESCRGQVSRAHASWKPRAWVLEASVQSAVRGGVQRAILTQLRPAELRRFLRTVQLRVRLGLPGAGKTRSCWTQATELVPPAPSLQCSLGGRRKPRGTAWAQRCREHSLCPAFQLWPQWPGQSSWVPGLPLWTRDQGPRAHSSPEPRACKAQSKAHKRRLRARSCRILEKQAQAHGSALLLALKGHDALGHQEEVPAAPVPRGTASRAAGFPAGQVPGSGMAALGGCPRGRAAGADPAQGVAPEMGLADVVAADPATASGSAVTAAGRWAFKKWHQRLAARSPRRGAASSPRPWSKPGPKGPESGQEAARAPRGWGLGAEHGAQLQL</sequence>
<dbReference type="EMBL" id="AL953897">
    <property type="status" value="NOT_ANNOTATED_CDS"/>
    <property type="molecule type" value="Genomic_DNA"/>
</dbReference>
<dbReference type="EMBL" id="AL833926">
    <property type="protein sequence ID" value="CAD38782.1"/>
    <property type="molecule type" value="mRNA"/>
</dbReference>
<dbReference type="EMBL" id="AL834308">
    <property type="protein sequence ID" value="CAD38978.2"/>
    <property type="molecule type" value="mRNA"/>
</dbReference>
<dbReference type="CCDS" id="CCDS90862.1">
    <molecule id="Q5SNV9-1"/>
</dbReference>
<dbReference type="RefSeq" id="NP_001010881.1">
    <molecule id="Q5SNV9-1"/>
    <property type="nucleotide sequence ID" value="NM_001010881.2"/>
</dbReference>
<dbReference type="RefSeq" id="XP_011539576.2">
    <property type="nucleotide sequence ID" value="XM_011541274.2"/>
</dbReference>
<dbReference type="RefSeq" id="XP_011539577.2">
    <property type="nucleotide sequence ID" value="XM_011541275.2"/>
</dbReference>
<dbReference type="BioGRID" id="129889">
    <property type="interactions" value="6"/>
</dbReference>
<dbReference type="FunCoup" id="Q5SNV9">
    <property type="interactions" value="1"/>
</dbReference>
<dbReference type="IntAct" id="Q5SNV9">
    <property type="interactions" value="2"/>
</dbReference>
<dbReference type="STRING" id="9606.ENSP00000414909"/>
<dbReference type="GlyGen" id="Q5SNV9">
    <property type="glycosylation" value="4 sites, 1 O-linked glycan (1 site)"/>
</dbReference>
<dbReference type="iPTMnet" id="Q5SNV9"/>
<dbReference type="BioMuta" id="C1orf167"/>
<dbReference type="DMDM" id="158706475"/>
<dbReference type="jPOST" id="Q5SNV9"/>
<dbReference type="MassIVE" id="Q5SNV9"/>
<dbReference type="PaxDb" id="9606-ENSP00000414909"/>
<dbReference type="PeptideAtlas" id="Q5SNV9"/>
<dbReference type="ProteomicsDB" id="63764">
    <molecule id="Q5SNV9-1"/>
</dbReference>
<dbReference type="ProteomicsDB" id="63765">
    <molecule id="Q5SNV9-2"/>
</dbReference>
<dbReference type="Antibodypedia" id="51586">
    <property type="antibodies" value="22 antibodies from 7 providers"/>
</dbReference>
<dbReference type="DNASU" id="284498"/>
<dbReference type="Ensembl" id="ENST00000688073.1">
    <molecule id="Q5SNV9-1"/>
    <property type="protein sequence ID" value="ENSP00000510540.1"/>
    <property type="gene ID" value="ENSG00000215910.8"/>
</dbReference>
<dbReference type="GeneID" id="284498"/>
<dbReference type="KEGG" id="hsa:284498"/>
<dbReference type="MANE-Select" id="ENST00000688073.1">
    <property type="protein sequence ID" value="ENSP00000510540.1"/>
    <property type="RefSeq nucleotide sequence ID" value="NM_001010881.2"/>
    <property type="RefSeq protein sequence ID" value="NP_001010881.1"/>
</dbReference>
<dbReference type="UCSC" id="uc057chg.1">
    <molecule id="Q5SNV9-1"/>
    <property type="organism name" value="human"/>
</dbReference>
<dbReference type="AGR" id="HGNC:25262"/>
<dbReference type="CTD" id="284498"/>
<dbReference type="DisGeNET" id="284498"/>
<dbReference type="GeneCards" id="C1orf167"/>
<dbReference type="HGNC" id="HGNC:25262">
    <property type="gene designation" value="C1orf167"/>
</dbReference>
<dbReference type="HPA" id="ENSG00000215910">
    <property type="expression patterns" value="Tissue enriched (testis)"/>
</dbReference>
<dbReference type="neXtProt" id="NX_Q5SNV9"/>
<dbReference type="OpenTargets" id="ENSG00000215910"/>
<dbReference type="VEuPathDB" id="HostDB:ENSG00000215910"/>
<dbReference type="eggNOG" id="ENOG502S8BN">
    <property type="taxonomic scope" value="Eukaryota"/>
</dbReference>
<dbReference type="GeneTree" id="ENSGT00390000000617"/>
<dbReference type="HOGENOM" id="CLU_266541_0_0_1"/>
<dbReference type="InParanoid" id="Q5SNV9"/>
<dbReference type="OMA" id="QWEPGAC"/>
<dbReference type="OrthoDB" id="9043019at2759"/>
<dbReference type="PAN-GO" id="Q5SNV9">
    <property type="GO annotations" value="0 GO annotations based on evolutionary models"/>
</dbReference>
<dbReference type="PhylomeDB" id="Q5SNV9"/>
<dbReference type="TreeFam" id="TF340835"/>
<dbReference type="PathwayCommons" id="Q5SNV9"/>
<dbReference type="SignaLink" id="Q5SNV9"/>
<dbReference type="BioGRID-ORCS" id="284498">
    <property type="hits" value="1 hit in 207 CRISPR screens"/>
</dbReference>
<dbReference type="ChiTaRS" id="C1orf167">
    <property type="organism name" value="human"/>
</dbReference>
<dbReference type="GenomeRNAi" id="284498"/>
<dbReference type="Pharos" id="Q5SNV9">
    <property type="development level" value="Tdark"/>
</dbReference>
<dbReference type="PRO" id="PR:Q5SNV9"/>
<dbReference type="Proteomes" id="UP000005640">
    <property type="component" value="Chromosome 1"/>
</dbReference>
<dbReference type="RNAct" id="Q5SNV9">
    <property type="molecule type" value="protein"/>
</dbReference>
<dbReference type="Bgee" id="ENSG00000215910">
    <property type="expression patterns" value="Expressed in left testis and 96 other cell types or tissues"/>
</dbReference>
<dbReference type="ExpressionAtlas" id="Q5SNV9">
    <property type="expression patterns" value="baseline and differential"/>
</dbReference>
<dbReference type="InterPro" id="IPR031473">
    <property type="entry name" value="DUF4684"/>
</dbReference>
<dbReference type="PANTHER" id="PTHR38493">
    <property type="entry name" value="CHROMOSOME 1 OPEN READING FRAME 167"/>
    <property type="match status" value="1"/>
</dbReference>
<dbReference type="PANTHER" id="PTHR38493:SF1">
    <property type="entry name" value="SFI1 SPINDLE BODY DOMAIN-CONTAINING PROTEIN"/>
    <property type="match status" value="1"/>
</dbReference>
<dbReference type="Pfam" id="PF15736">
    <property type="entry name" value="DUF4684"/>
    <property type="match status" value="1"/>
</dbReference>
<evidence type="ECO:0000256" key="1">
    <source>
        <dbReference type="SAM" id="MobiDB-lite"/>
    </source>
</evidence>
<evidence type="ECO:0000269" key="2">
    <source>
    </source>
</evidence>
<evidence type="ECO:0000303" key="3">
    <source>
    </source>
</evidence>
<reference key="1">
    <citation type="journal article" date="2006" name="Nature">
        <title>The DNA sequence and biological annotation of human chromosome 1.</title>
        <authorList>
            <person name="Gregory S.G."/>
            <person name="Barlow K.F."/>
            <person name="McLay K.E."/>
            <person name="Kaul R."/>
            <person name="Swarbreck D."/>
            <person name="Dunham A."/>
            <person name="Scott C.E."/>
            <person name="Howe K.L."/>
            <person name="Woodfine K."/>
            <person name="Spencer C.C.A."/>
            <person name="Jones M.C."/>
            <person name="Gillson C."/>
            <person name="Searle S."/>
            <person name="Zhou Y."/>
            <person name="Kokocinski F."/>
            <person name="McDonald L."/>
            <person name="Evans R."/>
            <person name="Phillips K."/>
            <person name="Atkinson A."/>
            <person name="Cooper R."/>
            <person name="Jones C."/>
            <person name="Hall R.E."/>
            <person name="Andrews T.D."/>
            <person name="Lloyd C."/>
            <person name="Ainscough R."/>
            <person name="Almeida J.P."/>
            <person name="Ambrose K.D."/>
            <person name="Anderson F."/>
            <person name="Andrew R.W."/>
            <person name="Ashwell R.I.S."/>
            <person name="Aubin K."/>
            <person name="Babbage A.K."/>
            <person name="Bagguley C.L."/>
            <person name="Bailey J."/>
            <person name="Beasley H."/>
            <person name="Bethel G."/>
            <person name="Bird C.P."/>
            <person name="Bray-Allen S."/>
            <person name="Brown J.Y."/>
            <person name="Brown A.J."/>
            <person name="Buckley D."/>
            <person name="Burton J."/>
            <person name="Bye J."/>
            <person name="Carder C."/>
            <person name="Chapman J.C."/>
            <person name="Clark S.Y."/>
            <person name="Clarke G."/>
            <person name="Clee C."/>
            <person name="Cobley V."/>
            <person name="Collier R.E."/>
            <person name="Corby N."/>
            <person name="Coville G.J."/>
            <person name="Davies J."/>
            <person name="Deadman R."/>
            <person name="Dunn M."/>
            <person name="Earthrowl M."/>
            <person name="Ellington A.G."/>
            <person name="Errington H."/>
            <person name="Frankish A."/>
            <person name="Frankland J."/>
            <person name="French L."/>
            <person name="Garner P."/>
            <person name="Garnett J."/>
            <person name="Gay L."/>
            <person name="Ghori M.R.J."/>
            <person name="Gibson R."/>
            <person name="Gilby L.M."/>
            <person name="Gillett W."/>
            <person name="Glithero R.J."/>
            <person name="Grafham D.V."/>
            <person name="Griffiths C."/>
            <person name="Griffiths-Jones S."/>
            <person name="Grocock R."/>
            <person name="Hammond S."/>
            <person name="Harrison E.S.I."/>
            <person name="Hart E."/>
            <person name="Haugen E."/>
            <person name="Heath P.D."/>
            <person name="Holmes S."/>
            <person name="Holt K."/>
            <person name="Howden P.J."/>
            <person name="Hunt A.R."/>
            <person name="Hunt S.E."/>
            <person name="Hunter G."/>
            <person name="Isherwood J."/>
            <person name="James R."/>
            <person name="Johnson C."/>
            <person name="Johnson D."/>
            <person name="Joy A."/>
            <person name="Kay M."/>
            <person name="Kershaw J.K."/>
            <person name="Kibukawa M."/>
            <person name="Kimberley A.M."/>
            <person name="King A."/>
            <person name="Knights A.J."/>
            <person name="Lad H."/>
            <person name="Laird G."/>
            <person name="Lawlor S."/>
            <person name="Leongamornlert D.A."/>
            <person name="Lloyd D.M."/>
            <person name="Loveland J."/>
            <person name="Lovell J."/>
            <person name="Lush M.J."/>
            <person name="Lyne R."/>
            <person name="Martin S."/>
            <person name="Mashreghi-Mohammadi M."/>
            <person name="Matthews L."/>
            <person name="Matthews N.S.W."/>
            <person name="McLaren S."/>
            <person name="Milne S."/>
            <person name="Mistry S."/>
            <person name="Moore M.J.F."/>
            <person name="Nickerson T."/>
            <person name="O'Dell C.N."/>
            <person name="Oliver K."/>
            <person name="Palmeiri A."/>
            <person name="Palmer S.A."/>
            <person name="Parker A."/>
            <person name="Patel D."/>
            <person name="Pearce A.V."/>
            <person name="Peck A.I."/>
            <person name="Pelan S."/>
            <person name="Phelps K."/>
            <person name="Phillimore B.J."/>
            <person name="Plumb R."/>
            <person name="Rajan J."/>
            <person name="Raymond C."/>
            <person name="Rouse G."/>
            <person name="Saenphimmachak C."/>
            <person name="Sehra H.K."/>
            <person name="Sheridan E."/>
            <person name="Shownkeen R."/>
            <person name="Sims S."/>
            <person name="Skuce C.D."/>
            <person name="Smith M."/>
            <person name="Steward C."/>
            <person name="Subramanian S."/>
            <person name="Sycamore N."/>
            <person name="Tracey A."/>
            <person name="Tromans A."/>
            <person name="Van Helmond Z."/>
            <person name="Wall M."/>
            <person name="Wallis J.M."/>
            <person name="White S."/>
            <person name="Whitehead S.L."/>
            <person name="Wilkinson J.E."/>
            <person name="Willey D.L."/>
            <person name="Williams H."/>
            <person name="Wilming L."/>
            <person name="Wray P.W."/>
            <person name="Wu Z."/>
            <person name="Coulson A."/>
            <person name="Vaudin M."/>
            <person name="Sulston J.E."/>
            <person name="Durbin R.M."/>
            <person name="Hubbard T."/>
            <person name="Wooster R."/>
            <person name="Dunham I."/>
            <person name="Carter N.P."/>
            <person name="McVean G."/>
            <person name="Ross M.T."/>
            <person name="Harrow J."/>
            <person name="Olson M.V."/>
            <person name="Beck S."/>
            <person name="Rogers J."/>
            <person name="Bentley D.R."/>
        </authorList>
    </citation>
    <scope>NUCLEOTIDE SEQUENCE [LARGE SCALE GENOMIC DNA]</scope>
</reference>
<reference key="2">
    <citation type="journal article" date="2007" name="BMC Genomics">
        <title>The full-ORF clone resource of the German cDNA consortium.</title>
        <authorList>
            <person name="Bechtel S."/>
            <person name="Rosenfelder H."/>
            <person name="Duda A."/>
            <person name="Schmidt C.P."/>
            <person name="Ernst U."/>
            <person name="Wellenreuther R."/>
            <person name="Mehrle A."/>
            <person name="Schuster C."/>
            <person name="Bahr A."/>
            <person name="Bloecker H."/>
            <person name="Heubner D."/>
            <person name="Hoerlein A."/>
            <person name="Michel G."/>
            <person name="Wedler H."/>
            <person name="Koehrer K."/>
            <person name="Ottenwaelder B."/>
            <person name="Poustka A."/>
            <person name="Wiemann S."/>
            <person name="Schupp I."/>
        </authorList>
    </citation>
    <scope>NUCLEOTIDE SEQUENCE [LARGE SCALE MRNA] OF 618-1449 (ISOFORM 3)</scope>
    <scope>NUCLEOTIDE SEQUENCE [LARGE SCALE MRNA] OF 835-1449 (ISOFORM 2)</scope>
    <scope>VARIANTS ARG-758; CYS-776; ILE-824; HIS-920; ARG-931 AND GLY-1432</scope>
    <source>
        <tissue>Testis</tissue>
    </source>
</reference>
<keyword id="KW-0025">Alternative splicing</keyword>
<keyword id="KW-1185">Reference proteome</keyword>
<name>CA167_HUMAN</name>
<accession>Q5SNV9</accession>
<accession>A0A8I5KXP5</accession>
<accession>Q8NDA9</accession>
<accession>Q8NDF3</accession>
<gene>
    <name type="primary">C1orf167</name>
</gene>
<proteinExistence type="evidence at transcript level"/>
<protein>
    <recommendedName>
        <fullName>Uncharacterized protein C1orf167</fullName>
    </recommendedName>
</protein>